<evidence type="ECO:0000255" key="1">
    <source>
        <dbReference type="HAMAP-Rule" id="MF_00176"/>
    </source>
</evidence>
<name>SYS_NOVAD</name>
<accession>Q2GA28</accession>
<sequence>MHDIRLIRENAEAFDAALARRGVGPVAQSILSLDSRRREIATRMQEVQARRNEASKAIGAAMGKGDKDTAEALKAEVAALKVELPALEEEERQLTAQQNAALAAYPNTPAADVPEGADEADNVEVSRWGTPRDFAFAPKEHADLGPALGLDFETGALISGARFTFLKGQMARLHRALAQFMLDRQTGENGYMECIPPLLVKDEAVFGTGQLPKFAEDLFRTTDGRWLIPTAEVSLTNAVQGQILGEAQLPLRMTALTPCFRSEAGAAGRDTRGFIRQHQFEKVELVSITRPEDSESEHERMTQCAEGILQALGLPYRKVLLCTGDMGFTARKTYDLEVWLPGQGAYREISSCSNCGDFQARRMNARYRPEGAKGTEFVHTLNGSGLAVGRTLVAVLENYQQEDGSVAVPEVLLPYMGGLARLTPQG</sequence>
<organism>
    <name type="scientific">Novosphingobium aromaticivorans (strain ATCC 700278 / DSM 12444 / CCUG 56034 / CIP 105152 / NBRC 16084 / F199)</name>
    <dbReference type="NCBI Taxonomy" id="279238"/>
    <lineage>
        <taxon>Bacteria</taxon>
        <taxon>Pseudomonadati</taxon>
        <taxon>Pseudomonadota</taxon>
        <taxon>Alphaproteobacteria</taxon>
        <taxon>Sphingomonadales</taxon>
        <taxon>Sphingomonadaceae</taxon>
        <taxon>Novosphingobium</taxon>
    </lineage>
</organism>
<reference key="1">
    <citation type="submission" date="2006-01" db="EMBL/GenBank/DDBJ databases">
        <title>Complete sequence of Novosphingobium aromaticivorans DSM 12444.</title>
        <authorList>
            <consortium name="US DOE Joint Genome Institute"/>
            <person name="Copeland A."/>
            <person name="Lucas S."/>
            <person name="Lapidus A."/>
            <person name="Barry K."/>
            <person name="Detter J.C."/>
            <person name="Glavina T."/>
            <person name="Hammon N."/>
            <person name="Israni S."/>
            <person name="Pitluck S."/>
            <person name="Chain P."/>
            <person name="Malfatti S."/>
            <person name="Shin M."/>
            <person name="Vergez L."/>
            <person name="Schmutz J."/>
            <person name="Larimer F."/>
            <person name="Land M."/>
            <person name="Kyrpides N."/>
            <person name="Ivanova N."/>
            <person name="Fredrickson J."/>
            <person name="Balkwill D."/>
            <person name="Romine M.F."/>
            <person name="Richardson P."/>
        </authorList>
    </citation>
    <scope>NUCLEOTIDE SEQUENCE [LARGE SCALE GENOMIC DNA]</scope>
    <source>
        <strain>ATCC 700278 / DSM 12444 / CCUG 56034 / CIP 105152 / NBRC 16084 / F199</strain>
    </source>
</reference>
<keyword id="KW-0030">Aminoacyl-tRNA synthetase</keyword>
<keyword id="KW-0067">ATP-binding</keyword>
<keyword id="KW-0963">Cytoplasm</keyword>
<keyword id="KW-0436">Ligase</keyword>
<keyword id="KW-0547">Nucleotide-binding</keyword>
<keyword id="KW-0648">Protein biosynthesis</keyword>
<keyword id="KW-1185">Reference proteome</keyword>
<protein>
    <recommendedName>
        <fullName evidence="1">Serine--tRNA ligase</fullName>
        <ecNumber evidence="1">6.1.1.11</ecNumber>
    </recommendedName>
    <alternativeName>
        <fullName evidence="1">Seryl-tRNA synthetase</fullName>
        <shortName evidence="1">SerRS</shortName>
    </alternativeName>
    <alternativeName>
        <fullName evidence="1">Seryl-tRNA(Ser/Sec) synthetase</fullName>
    </alternativeName>
</protein>
<dbReference type="EC" id="6.1.1.11" evidence="1"/>
<dbReference type="EMBL" id="CP000248">
    <property type="protein sequence ID" value="ABD25295.1"/>
    <property type="molecule type" value="Genomic_DNA"/>
</dbReference>
<dbReference type="RefSeq" id="WP_011444509.1">
    <property type="nucleotide sequence ID" value="NC_007794.1"/>
</dbReference>
<dbReference type="SMR" id="Q2GA28"/>
<dbReference type="STRING" id="279238.Saro_0850"/>
<dbReference type="KEGG" id="nar:Saro_0850"/>
<dbReference type="eggNOG" id="COG0172">
    <property type="taxonomic scope" value="Bacteria"/>
</dbReference>
<dbReference type="HOGENOM" id="CLU_023797_1_1_5"/>
<dbReference type="UniPathway" id="UPA00906">
    <property type="reaction ID" value="UER00895"/>
</dbReference>
<dbReference type="Proteomes" id="UP000009134">
    <property type="component" value="Chromosome"/>
</dbReference>
<dbReference type="GO" id="GO:0005737">
    <property type="term" value="C:cytoplasm"/>
    <property type="evidence" value="ECO:0007669"/>
    <property type="project" value="UniProtKB-SubCell"/>
</dbReference>
<dbReference type="GO" id="GO:0005524">
    <property type="term" value="F:ATP binding"/>
    <property type="evidence" value="ECO:0007669"/>
    <property type="project" value="UniProtKB-UniRule"/>
</dbReference>
<dbReference type="GO" id="GO:0004828">
    <property type="term" value="F:serine-tRNA ligase activity"/>
    <property type="evidence" value="ECO:0007669"/>
    <property type="project" value="UniProtKB-UniRule"/>
</dbReference>
<dbReference type="GO" id="GO:0016260">
    <property type="term" value="P:selenocysteine biosynthetic process"/>
    <property type="evidence" value="ECO:0007669"/>
    <property type="project" value="UniProtKB-UniRule"/>
</dbReference>
<dbReference type="GO" id="GO:0006434">
    <property type="term" value="P:seryl-tRNA aminoacylation"/>
    <property type="evidence" value="ECO:0007669"/>
    <property type="project" value="UniProtKB-UniRule"/>
</dbReference>
<dbReference type="CDD" id="cd00770">
    <property type="entry name" value="SerRS_core"/>
    <property type="match status" value="1"/>
</dbReference>
<dbReference type="Gene3D" id="3.30.930.10">
    <property type="entry name" value="Bira Bifunctional Protein, Domain 2"/>
    <property type="match status" value="1"/>
</dbReference>
<dbReference type="Gene3D" id="1.10.287.40">
    <property type="entry name" value="Serine-tRNA synthetase, tRNA binding domain"/>
    <property type="match status" value="1"/>
</dbReference>
<dbReference type="HAMAP" id="MF_00176">
    <property type="entry name" value="Ser_tRNA_synth_type1"/>
    <property type="match status" value="1"/>
</dbReference>
<dbReference type="InterPro" id="IPR002314">
    <property type="entry name" value="aa-tRNA-synt_IIb"/>
</dbReference>
<dbReference type="InterPro" id="IPR006195">
    <property type="entry name" value="aa-tRNA-synth_II"/>
</dbReference>
<dbReference type="InterPro" id="IPR045864">
    <property type="entry name" value="aa-tRNA-synth_II/BPL/LPL"/>
</dbReference>
<dbReference type="InterPro" id="IPR002317">
    <property type="entry name" value="Ser-tRNA-ligase_type_1"/>
</dbReference>
<dbReference type="InterPro" id="IPR015866">
    <property type="entry name" value="Ser-tRNA-synth_1_N"/>
</dbReference>
<dbReference type="InterPro" id="IPR042103">
    <property type="entry name" value="SerRS_1_N_sf"/>
</dbReference>
<dbReference type="InterPro" id="IPR033729">
    <property type="entry name" value="SerRS_core"/>
</dbReference>
<dbReference type="InterPro" id="IPR010978">
    <property type="entry name" value="tRNA-bd_arm"/>
</dbReference>
<dbReference type="NCBIfam" id="TIGR00414">
    <property type="entry name" value="serS"/>
    <property type="match status" value="1"/>
</dbReference>
<dbReference type="PANTHER" id="PTHR43697:SF1">
    <property type="entry name" value="SERINE--TRNA LIGASE"/>
    <property type="match status" value="1"/>
</dbReference>
<dbReference type="PANTHER" id="PTHR43697">
    <property type="entry name" value="SERYL-TRNA SYNTHETASE"/>
    <property type="match status" value="1"/>
</dbReference>
<dbReference type="Pfam" id="PF02403">
    <property type="entry name" value="Seryl_tRNA_N"/>
    <property type="match status" value="1"/>
</dbReference>
<dbReference type="Pfam" id="PF00587">
    <property type="entry name" value="tRNA-synt_2b"/>
    <property type="match status" value="1"/>
</dbReference>
<dbReference type="PIRSF" id="PIRSF001529">
    <property type="entry name" value="Ser-tRNA-synth_IIa"/>
    <property type="match status" value="1"/>
</dbReference>
<dbReference type="PRINTS" id="PR00981">
    <property type="entry name" value="TRNASYNTHSER"/>
</dbReference>
<dbReference type="SUPFAM" id="SSF55681">
    <property type="entry name" value="Class II aaRS and biotin synthetases"/>
    <property type="match status" value="1"/>
</dbReference>
<dbReference type="SUPFAM" id="SSF46589">
    <property type="entry name" value="tRNA-binding arm"/>
    <property type="match status" value="1"/>
</dbReference>
<dbReference type="PROSITE" id="PS50862">
    <property type="entry name" value="AA_TRNA_LIGASE_II"/>
    <property type="match status" value="1"/>
</dbReference>
<proteinExistence type="inferred from homology"/>
<comment type="function">
    <text evidence="1">Catalyzes the attachment of serine to tRNA(Ser). Is also able to aminoacylate tRNA(Sec) with serine, to form the misacylated tRNA L-seryl-tRNA(Sec), which will be further converted into selenocysteinyl-tRNA(Sec).</text>
</comment>
<comment type="catalytic activity">
    <reaction evidence="1">
        <text>tRNA(Ser) + L-serine + ATP = L-seryl-tRNA(Ser) + AMP + diphosphate + H(+)</text>
        <dbReference type="Rhea" id="RHEA:12292"/>
        <dbReference type="Rhea" id="RHEA-COMP:9669"/>
        <dbReference type="Rhea" id="RHEA-COMP:9703"/>
        <dbReference type="ChEBI" id="CHEBI:15378"/>
        <dbReference type="ChEBI" id="CHEBI:30616"/>
        <dbReference type="ChEBI" id="CHEBI:33019"/>
        <dbReference type="ChEBI" id="CHEBI:33384"/>
        <dbReference type="ChEBI" id="CHEBI:78442"/>
        <dbReference type="ChEBI" id="CHEBI:78533"/>
        <dbReference type="ChEBI" id="CHEBI:456215"/>
        <dbReference type="EC" id="6.1.1.11"/>
    </reaction>
</comment>
<comment type="catalytic activity">
    <reaction evidence="1">
        <text>tRNA(Sec) + L-serine + ATP = L-seryl-tRNA(Sec) + AMP + diphosphate + H(+)</text>
        <dbReference type="Rhea" id="RHEA:42580"/>
        <dbReference type="Rhea" id="RHEA-COMP:9742"/>
        <dbReference type="Rhea" id="RHEA-COMP:10128"/>
        <dbReference type="ChEBI" id="CHEBI:15378"/>
        <dbReference type="ChEBI" id="CHEBI:30616"/>
        <dbReference type="ChEBI" id="CHEBI:33019"/>
        <dbReference type="ChEBI" id="CHEBI:33384"/>
        <dbReference type="ChEBI" id="CHEBI:78442"/>
        <dbReference type="ChEBI" id="CHEBI:78533"/>
        <dbReference type="ChEBI" id="CHEBI:456215"/>
        <dbReference type="EC" id="6.1.1.11"/>
    </reaction>
</comment>
<comment type="pathway">
    <text evidence="1">Aminoacyl-tRNA biosynthesis; selenocysteinyl-tRNA(Sec) biosynthesis; L-seryl-tRNA(Sec) from L-serine and tRNA(Sec): step 1/1.</text>
</comment>
<comment type="subunit">
    <text evidence="1">Homodimer. The tRNA molecule binds across the dimer.</text>
</comment>
<comment type="subcellular location">
    <subcellularLocation>
        <location evidence="1">Cytoplasm</location>
    </subcellularLocation>
</comment>
<comment type="domain">
    <text evidence="1">Consists of two distinct domains, a catalytic core and a N-terminal extension that is involved in tRNA binding.</text>
</comment>
<comment type="similarity">
    <text evidence="1">Belongs to the class-II aminoacyl-tRNA synthetase family. Type-1 seryl-tRNA synthetase subfamily.</text>
</comment>
<gene>
    <name evidence="1" type="primary">serS</name>
    <name type="ordered locus">Saro_0850</name>
</gene>
<feature type="chain" id="PRO_1000019753" description="Serine--tRNA ligase">
    <location>
        <begin position="1"/>
        <end position="426"/>
    </location>
</feature>
<feature type="binding site" evidence="1">
    <location>
        <begin position="230"/>
        <end position="232"/>
    </location>
    <ligand>
        <name>L-serine</name>
        <dbReference type="ChEBI" id="CHEBI:33384"/>
    </ligand>
</feature>
<feature type="binding site" evidence="1">
    <location>
        <begin position="261"/>
        <end position="263"/>
    </location>
    <ligand>
        <name>ATP</name>
        <dbReference type="ChEBI" id="CHEBI:30616"/>
    </ligand>
</feature>
<feature type="binding site" evidence="1">
    <location>
        <position position="284"/>
    </location>
    <ligand>
        <name>L-serine</name>
        <dbReference type="ChEBI" id="CHEBI:33384"/>
    </ligand>
</feature>
<feature type="binding site" evidence="1">
    <location>
        <begin position="348"/>
        <end position="351"/>
    </location>
    <ligand>
        <name>ATP</name>
        <dbReference type="ChEBI" id="CHEBI:30616"/>
    </ligand>
</feature>
<feature type="binding site" evidence="1">
    <location>
        <position position="384"/>
    </location>
    <ligand>
        <name>L-serine</name>
        <dbReference type="ChEBI" id="CHEBI:33384"/>
    </ligand>
</feature>